<reference key="1">
    <citation type="journal article" date="2005" name="BMC Genomics">
        <title>Bacterial genome adaptation to niches: divergence of the potential virulence genes in three Burkholderia species of different survival strategies.</title>
        <authorList>
            <person name="Kim H.S."/>
            <person name="Schell M.A."/>
            <person name="Yu Y."/>
            <person name="Ulrich R.L."/>
            <person name="Sarria S.H."/>
            <person name="Nierman W.C."/>
            <person name="DeShazer D."/>
        </authorList>
    </citation>
    <scope>NUCLEOTIDE SEQUENCE [LARGE SCALE GENOMIC DNA]</scope>
    <source>
        <strain>ATCC 700388 / DSM 13276 / CCUG 48851 / CIP 106301 / E264</strain>
    </source>
</reference>
<evidence type="ECO:0000255" key="1">
    <source>
        <dbReference type="HAMAP-Rule" id="MF_00131"/>
    </source>
</evidence>
<keyword id="KW-0028">Amino-acid biosynthesis</keyword>
<keyword id="KW-0057">Aromatic amino acid biosynthesis</keyword>
<keyword id="KW-0456">Lyase</keyword>
<keyword id="KW-0822">Tryptophan biosynthesis</keyword>
<proteinExistence type="inferred from homology"/>
<feature type="chain" id="PRO_1000018181" description="Tryptophan synthase alpha chain">
    <location>
        <begin position="1"/>
        <end position="271"/>
    </location>
</feature>
<feature type="active site" description="Proton acceptor" evidence="1">
    <location>
        <position position="49"/>
    </location>
</feature>
<feature type="active site" description="Proton acceptor" evidence="1">
    <location>
        <position position="60"/>
    </location>
</feature>
<organism>
    <name type="scientific">Burkholderia thailandensis (strain ATCC 700388 / DSM 13276 / CCUG 48851 / CIP 106301 / E264)</name>
    <dbReference type="NCBI Taxonomy" id="271848"/>
    <lineage>
        <taxon>Bacteria</taxon>
        <taxon>Pseudomonadati</taxon>
        <taxon>Pseudomonadota</taxon>
        <taxon>Betaproteobacteria</taxon>
        <taxon>Burkholderiales</taxon>
        <taxon>Burkholderiaceae</taxon>
        <taxon>Burkholderia</taxon>
        <taxon>pseudomallei group</taxon>
    </lineage>
</organism>
<protein>
    <recommendedName>
        <fullName evidence="1">Tryptophan synthase alpha chain</fullName>
        <ecNumber evidence="1">4.2.1.20</ecNumber>
    </recommendedName>
</protein>
<dbReference type="EC" id="4.2.1.20" evidence="1"/>
<dbReference type="EMBL" id="CP000085">
    <property type="protein sequence ID" value="ABC35406.1"/>
    <property type="molecule type" value="Genomic_DNA"/>
</dbReference>
<dbReference type="RefSeq" id="WP_009895853.1">
    <property type="nucleotide sequence ID" value="NZ_CP008786.1"/>
</dbReference>
<dbReference type="SMR" id="Q2T7G9"/>
<dbReference type="GeneID" id="45118169"/>
<dbReference type="KEGG" id="bte:BTH_II0681"/>
<dbReference type="HOGENOM" id="CLU_016734_0_0_4"/>
<dbReference type="UniPathway" id="UPA00035">
    <property type="reaction ID" value="UER00044"/>
</dbReference>
<dbReference type="Proteomes" id="UP000001930">
    <property type="component" value="Chromosome II"/>
</dbReference>
<dbReference type="GO" id="GO:0005829">
    <property type="term" value="C:cytosol"/>
    <property type="evidence" value="ECO:0007669"/>
    <property type="project" value="TreeGrafter"/>
</dbReference>
<dbReference type="GO" id="GO:0004834">
    <property type="term" value="F:tryptophan synthase activity"/>
    <property type="evidence" value="ECO:0007669"/>
    <property type="project" value="UniProtKB-UniRule"/>
</dbReference>
<dbReference type="CDD" id="cd04724">
    <property type="entry name" value="Tryptophan_synthase_alpha"/>
    <property type="match status" value="1"/>
</dbReference>
<dbReference type="FunFam" id="3.20.20.70:FF:000037">
    <property type="entry name" value="Tryptophan synthase alpha chain"/>
    <property type="match status" value="1"/>
</dbReference>
<dbReference type="Gene3D" id="3.20.20.70">
    <property type="entry name" value="Aldolase class I"/>
    <property type="match status" value="1"/>
</dbReference>
<dbReference type="HAMAP" id="MF_00131">
    <property type="entry name" value="Trp_synth_alpha"/>
    <property type="match status" value="1"/>
</dbReference>
<dbReference type="InterPro" id="IPR013785">
    <property type="entry name" value="Aldolase_TIM"/>
</dbReference>
<dbReference type="InterPro" id="IPR011060">
    <property type="entry name" value="RibuloseP-bd_barrel"/>
</dbReference>
<dbReference type="InterPro" id="IPR018204">
    <property type="entry name" value="Trp_synthase_alpha_AS"/>
</dbReference>
<dbReference type="InterPro" id="IPR002028">
    <property type="entry name" value="Trp_synthase_suA"/>
</dbReference>
<dbReference type="NCBIfam" id="TIGR00262">
    <property type="entry name" value="trpA"/>
    <property type="match status" value="1"/>
</dbReference>
<dbReference type="PANTHER" id="PTHR43406:SF1">
    <property type="entry name" value="TRYPTOPHAN SYNTHASE ALPHA CHAIN, CHLOROPLASTIC"/>
    <property type="match status" value="1"/>
</dbReference>
<dbReference type="PANTHER" id="PTHR43406">
    <property type="entry name" value="TRYPTOPHAN SYNTHASE, ALPHA CHAIN"/>
    <property type="match status" value="1"/>
</dbReference>
<dbReference type="Pfam" id="PF00290">
    <property type="entry name" value="Trp_syntA"/>
    <property type="match status" value="1"/>
</dbReference>
<dbReference type="SUPFAM" id="SSF51366">
    <property type="entry name" value="Ribulose-phoshate binding barrel"/>
    <property type="match status" value="1"/>
</dbReference>
<dbReference type="PROSITE" id="PS00167">
    <property type="entry name" value="TRP_SYNTHASE_ALPHA"/>
    <property type="match status" value="1"/>
</dbReference>
<name>TRPA_BURTA</name>
<comment type="function">
    <text evidence="1">The alpha subunit is responsible for the aldol cleavage of indoleglycerol phosphate to indole and glyceraldehyde 3-phosphate.</text>
</comment>
<comment type="catalytic activity">
    <reaction evidence="1">
        <text>(1S,2R)-1-C-(indol-3-yl)glycerol 3-phosphate + L-serine = D-glyceraldehyde 3-phosphate + L-tryptophan + H2O</text>
        <dbReference type="Rhea" id="RHEA:10532"/>
        <dbReference type="ChEBI" id="CHEBI:15377"/>
        <dbReference type="ChEBI" id="CHEBI:33384"/>
        <dbReference type="ChEBI" id="CHEBI:57912"/>
        <dbReference type="ChEBI" id="CHEBI:58866"/>
        <dbReference type="ChEBI" id="CHEBI:59776"/>
        <dbReference type="EC" id="4.2.1.20"/>
    </reaction>
</comment>
<comment type="pathway">
    <text evidence="1">Amino-acid biosynthesis; L-tryptophan biosynthesis; L-tryptophan from chorismate: step 5/5.</text>
</comment>
<comment type="subunit">
    <text evidence="1">Tetramer of two alpha and two beta chains.</text>
</comment>
<comment type="similarity">
    <text evidence="1">Belongs to the TrpA family.</text>
</comment>
<gene>
    <name evidence="1" type="primary">trpA</name>
    <name type="ordered locus">BTH_II0681</name>
</gene>
<sequence length="271" mass="28342">MSRIQNTFAALAAQGRKGLIPFITAGDPDPSRTVELMHALAEGGADVIELGVPFSDPMADGPVIQRSSERALAKGVTLRRVLDDVRRFRERDRQTPVVLMGYANPIERMGEDAFAAAARDAGVDGVLVVDYPPEESHDFAAKMRAAGIDPIFLLAPTSTDDRIAAVGEVASGYVYYVSLKGVTGAANLDVSTIEGKIPAIKSRVPLPVGVGFGIRDAATARAVAEVADAVVIGSRLVQLLEQAAPENAAAELKEFVAGLRAAIDGAAKPAA</sequence>
<accession>Q2T7G9</accession>